<feature type="chain" id="PRO_0000219157" description="UDP-GalNAc:beta-1,3-N-acetylgalactosaminyltransferase 1">
    <location>
        <begin position="1"/>
        <end position="331"/>
    </location>
</feature>
<feature type="topological domain" description="Cytoplasmic" evidence="3">
    <location>
        <begin position="1"/>
        <end position="20"/>
    </location>
</feature>
<feature type="transmembrane region" description="Helical; Signal-anchor for type II membrane protein" evidence="3">
    <location>
        <begin position="21"/>
        <end position="43"/>
    </location>
</feature>
<feature type="topological domain" description="Lumenal" evidence="3">
    <location>
        <begin position="44"/>
        <end position="331"/>
    </location>
</feature>
<feature type="glycosylation site" description="N-linked (GlcNAc...) asparagine" evidence="3">
    <location>
        <position position="72"/>
    </location>
</feature>
<feature type="glycosylation site" description="N-linked (GlcNAc...) asparagine" evidence="3">
    <location>
        <position position="154"/>
    </location>
</feature>
<feature type="glycosylation site" description="N-linked (GlcNAc...) asparagine" evidence="3">
    <location>
        <position position="198"/>
    </location>
</feature>
<feature type="glycosylation site" description="N-linked (GlcNAc...) asparagine" evidence="3">
    <location>
        <position position="212"/>
    </location>
</feature>
<feature type="glycosylation site" description="N-linked (GlcNAc...) asparagine" evidence="3">
    <location>
        <position position="326"/>
    </location>
</feature>
<name>B3GL1_PONAB</name>
<keyword id="KW-0325">Glycoprotein</keyword>
<keyword id="KW-0328">Glycosyltransferase</keyword>
<keyword id="KW-0333">Golgi apparatus</keyword>
<keyword id="KW-0443">Lipid metabolism</keyword>
<keyword id="KW-0460">Magnesium</keyword>
<keyword id="KW-0472">Membrane</keyword>
<keyword id="KW-1185">Reference proteome</keyword>
<keyword id="KW-0735">Signal-anchor</keyword>
<keyword id="KW-0808">Transferase</keyword>
<keyword id="KW-0812">Transmembrane</keyword>
<keyword id="KW-1133">Transmembrane helix</keyword>
<accession>Q5RAL7</accession>
<dbReference type="EC" id="2.4.1.79" evidence="1"/>
<dbReference type="EMBL" id="CR858998">
    <property type="protein sequence ID" value="CAH91193.1"/>
    <property type="molecule type" value="mRNA"/>
</dbReference>
<dbReference type="RefSeq" id="NP_001127386.1">
    <property type="nucleotide sequence ID" value="NM_001133914.1"/>
</dbReference>
<dbReference type="RefSeq" id="XP_024099913.2">
    <property type="nucleotide sequence ID" value="XM_024244145.3"/>
</dbReference>
<dbReference type="RefSeq" id="XP_024099914.2">
    <property type="nucleotide sequence ID" value="XM_024244146.3"/>
</dbReference>
<dbReference type="RefSeq" id="XP_024099915.2">
    <property type="nucleotide sequence ID" value="XM_024244147.3"/>
</dbReference>
<dbReference type="RefSeq" id="XP_024099916.2">
    <property type="nucleotide sequence ID" value="XM_024244148.3"/>
</dbReference>
<dbReference type="RefSeq" id="XP_024099919.2">
    <property type="nucleotide sequence ID" value="XM_024244151.3"/>
</dbReference>
<dbReference type="RefSeq" id="XP_054406432.2">
    <property type="nucleotide sequence ID" value="XM_054550457.2"/>
</dbReference>
<dbReference type="RefSeq" id="XP_054406434.2">
    <property type="nucleotide sequence ID" value="XM_054550459.2"/>
</dbReference>
<dbReference type="RefSeq" id="XP_063577713.1">
    <property type="nucleotide sequence ID" value="XM_063721643.1"/>
</dbReference>
<dbReference type="SMR" id="Q5RAL7"/>
<dbReference type="FunCoup" id="Q5RAL7">
    <property type="interactions" value="265"/>
</dbReference>
<dbReference type="STRING" id="9601.ENSPPYP00000015944"/>
<dbReference type="CAZy" id="GT31">
    <property type="family name" value="Glycosyltransferase Family 31"/>
</dbReference>
<dbReference type="GlyCosmos" id="Q5RAL7">
    <property type="glycosylation" value="5 sites, No reported glycans"/>
</dbReference>
<dbReference type="GeneID" id="100174453"/>
<dbReference type="KEGG" id="pon:100174453"/>
<dbReference type="CTD" id="8706"/>
<dbReference type="eggNOG" id="KOG2287">
    <property type="taxonomic scope" value="Eukaryota"/>
</dbReference>
<dbReference type="InParanoid" id="Q5RAL7"/>
<dbReference type="OrthoDB" id="5957813at2759"/>
<dbReference type="UniPathway" id="UPA00378"/>
<dbReference type="Proteomes" id="UP000001595">
    <property type="component" value="Unplaced"/>
</dbReference>
<dbReference type="GO" id="GO:0000139">
    <property type="term" value="C:Golgi membrane"/>
    <property type="evidence" value="ECO:0007669"/>
    <property type="project" value="UniProtKB-SubCell"/>
</dbReference>
<dbReference type="GO" id="GO:0047273">
    <property type="term" value="F:galactosylgalactosylglucosylceramide beta-D-acetylgalactosaminyltransferase activity"/>
    <property type="evidence" value="ECO:0007669"/>
    <property type="project" value="UniProtKB-EC"/>
</dbReference>
<dbReference type="GO" id="GO:0008499">
    <property type="term" value="F:N-acetyl-beta-D-glucosaminide beta-(1,3)-galactosyltransferase activity"/>
    <property type="evidence" value="ECO:0007669"/>
    <property type="project" value="TreeGrafter"/>
</dbReference>
<dbReference type="GO" id="GO:0006629">
    <property type="term" value="P:lipid metabolic process"/>
    <property type="evidence" value="ECO:0007669"/>
    <property type="project" value="UniProtKB-KW"/>
</dbReference>
<dbReference type="GO" id="GO:0006493">
    <property type="term" value="P:protein O-linked glycosylation"/>
    <property type="evidence" value="ECO:0007669"/>
    <property type="project" value="TreeGrafter"/>
</dbReference>
<dbReference type="FunFam" id="3.90.550.50:FF:000001">
    <property type="entry name" value="Hexosyltransferase"/>
    <property type="match status" value="1"/>
</dbReference>
<dbReference type="Gene3D" id="3.90.550.50">
    <property type="match status" value="1"/>
</dbReference>
<dbReference type="InterPro" id="IPR002659">
    <property type="entry name" value="Glyco_trans_31"/>
</dbReference>
<dbReference type="PANTHER" id="PTHR11214">
    <property type="entry name" value="BETA-1,3-N-ACETYLGLUCOSAMINYLTRANSFERASE"/>
    <property type="match status" value="1"/>
</dbReference>
<dbReference type="PANTHER" id="PTHR11214:SF153">
    <property type="entry name" value="UDP-GALNAC:BETA-1,3-N-ACETYLGALACTOSAMINYLTRANSFERASE 1"/>
    <property type="match status" value="1"/>
</dbReference>
<dbReference type="Pfam" id="PF01762">
    <property type="entry name" value="Galactosyl_T"/>
    <property type="match status" value="1"/>
</dbReference>
<organism>
    <name type="scientific">Pongo abelii</name>
    <name type="common">Sumatran orangutan</name>
    <name type="synonym">Pongo pygmaeus abelii</name>
    <dbReference type="NCBI Taxonomy" id="9601"/>
    <lineage>
        <taxon>Eukaryota</taxon>
        <taxon>Metazoa</taxon>
        <taxon>Chordata</taxon>
        <taxon>Craniata</taxon>
        <taxon>Vertebrata</taxon>
        <taxon>Euteleostomi</taxon>
        <taxon>Mammalia</taxon>
        <taxon>Eutheria</taxon>
        <taxon>Euarchontoglires</taxon>
        <taxon>Primates</taxon>
        <taxon>Haplorrhini</taxon>
        <taxon>Catarrhini</taxon>
        <taxon>Hominidae</taxon>
        <taxon>Pongo</taxon>
    </lineage>
</organism>
<sequence length="331" mass="39478">MASALWTVLPSRMSLRSLQWSLLLLSLLSFLVMWYLSLPHYNVIERVNWMYFYEYEPIYRQDFHFTLREHSNCSHQNPFLVILVTSHPSDVKARQAIRVTWGEKKSWWGYEVLTFFLLGQEAEKEDKMLALSLEDEHLLYGDIIRQDFLDTYNNLTLKTIMAFRWVTEFCPNAKYVMKTDTDVFINTGNLVKYLLNLNHSEKFFTGYPLIDNYSYRGFYQKTHISYQEYPFKVFPPYCSGLGYIMSRDLVPRIYEMMGHVKPIKFEDVYVGICLNLLKVNIHIPEDTNLFFLYRIHLDVCQLRRVIAAHGFSSKEIITFWQVMLRNTTCHY</sequence>
<comment type="function">
    <text evidence="1 2">Transfers N-acetylgalactosamine onto globotriaosylceramide. Plays a critical role in preimplantation stage embryonic development.</text>
</comment>
<comment type="catalytic activity">
    <reaction evidence="1">
        <text>a globoside Gb3Cer (d18:1(4E)) + UDP-N-acetyl-alpha-D-galactosamine = a globoside Gb4Cer (d18:1(4E)) + UDP + H(+)</text>
        <dbReference type="Rhea" id="RHEA:22252"/>
        <dbReference type="ChEBI" id="CHEBI:15378"/>
        <dbReference type="ChEBI" id="CHEBI:18259"/>
        <dbReference type="ChEBI" id="CHEBI:18313"/>
        <dbReference type="ChEBI" id="CHEBI:58223"/>
        <dbReference type="ChEBI" id="CHEBI:67138"/>
        <dbReference type="EC" id="2.4.1.79"/>
    </reaction>
    <physiologicalReaction direction="left-to-right" evidence="1">
        <dbReference type="Rhea" id="RHEA:22253"/>
    </physiologicalReaction>
</comment>
<comment type="cofactor">
    <cofactor evidence="1">
        <name>Mg(2+)</name>
        <dbReference type="ChEBI" id="CHEBI:18420"/>
    </cofactor>
</comment>
<comment type="pathway">
    <text>Protein modification; protein glycosylation.</text>
</comment>
<comment type="subcellular location">
    <subcellularLocation>
        <location evidence="1">Golgi apparatus membrane</location>
        <topology evidence="1">Single-pass type II membrane protein</topology>
    </subcellularLocation>
</comment>
<comment type="similarity">
    <text evidence="4">Belongs to the glycosyltransferase 31 family.</text>
</comment>
<reference key="1">
    <citation type="submission" date="2004-11" db="EMBL/GenBank/DDBJ databases">
        <authorList>
            <consortium name="The German cDNA consortium"/>
        </authorList>
    </citation>
    <scope>NUCLEOTIDE SEQUENCE [LARGE SCALE MRNA]</scope>
    <source>
        <tissue>Brain cortex</tissue>
    </source>
</reference>
<protein>
    <recommendedName>
        <fullName>UDP-GalNAc:beta-1,3-N-acetylgalactosaminyltransferase 1</fullName>
        <shortName>Beta-1,3-GalNAc-T1</shortName>
        <ecNumber evidence="1">2.4.1.79</ecNumber>
    </recommendedName>
    <alternativeName>
        <fullName>Beta-1,3-galactosyltransferase 3</fullName>
        <shortName>Beta-1,3-GalTase 3</shortName>
        <shortName>Beta3Gal-T3</shortName>
        <shortName>Beta3GalT3</shortName>
        <shortName>b3Gal-T3</shortName>
    </alternativeName>
    <alternativeName>
        <fullName>Beta-3-Gx-T3</fullName>
    </alternativeName>
    <alternativeName>
        <fullName>Galactosylgalactosylglucosylceramide beta-D-acetyl-galactosaminyltransferase</fullName>
    </alternativeName>
    <alternativeName>
        <fullName>Globoside synthase</fullName>
    </alternativeName>
    <alternativeName>
        <fullName>UDP-N-acetylgalactosamine:globotriaosylceramide beta-1,3-N-acetylgalactosaminyltransferase</fullName>
    </alternativeName>
</protein>
<evidence type="ECO:0000250" key="1">
    <source>
        <dbReference type="UniProtKB" id="O75752"/>
    </source>
</evidence>
<evidence type="ECO:0000250" key="2">
    <source>
        <dbReference type="UniProtKB" id="Q920V1"/>
    </source>
</evidence>
<evidence type="ECO:0000255" key="3"/>
<evidence type="ECO:0000305" key="4"/>
<proteinExistence type="evidence at transcript level"/>
<gene>
    <name type="primary">B3GALNT1</name>
    <name type="synonym">B3GALT3</name>
</gene>